<accession>Q47F90</accession>
<evidence type="ECO:0000255" key="1">
    <source>
        <dbReference type="HAMAP-Rule" id="MF_01220"/>
    </source>
</evidence>
<protein>
    <recommendedName>
        <fullName evidence="1">Uridylate kinase</fullName>
        <shortName evidence="1">UK</shortName>
        <ecNumber evidence="1">2.7.4.22</ecNumber>
    </recommendedName>
    <alternativeName>
        <fullName evidence="1">Uridine monophosphate kinase</fullName>
        <shortName evidence="1">UMP kinase</shortName>
        <shortName evidence="1">UMPK</shortName>
    </alternativeName>
</protein>
<proteinExistence type="inferred from homology"/>
<name>PYRH_DECAR</name>
<keyword id="KW-0067">ATP-binding</keyword>
<keyword id="KW-0963">Cytoplasm</keyword>
<keyword id="KW-0418">Kinase</keyword>
<keyword id="KW-0547">Nucleotide-binding</keyword>
<keyword id="KW-0665">Pyrimidine biosynthesis</keyword>
<keyword id="KW-0808">Transferase</keyword>
<dbReference type="EC" id="2.7.4.22" evidence="1"/>
<dbReference type="EMBL" id="CP000089">
    <property type="protein sequence ID" value="AAZ46491.1"/>
    <property type="molecule type" value="Genomic_DNA"/>
</dbReference>
<dbReference type="SMR" id="Q47F90"/>
<dbReference type="STRING" id="159087.Daro_1744"/>
<dbReference type="KEGG" id="dar:Daro_1744"/>
<dbReference type="eggNOG" id="COG0528">
    <property type="taxonomic scope" value="Bacteria"/>
</dbReference>
<dbReference type="HOGENOM" id="CLU_033861_0_0_4"/>
<dbReference type="OrthoDB" id="9807458at2"/>
<dbReference type="UniPathway" id="UPA00159">
    <property type="reaction ID" value="UER00275"/>
</dbReference>
<dbReference type="GO" id="GO:0005829">
    <property type="term" value="C:cytosol"/>
    <property type="evidence" value="ECO:0007669"/>
    <property type="project" value="TreeGrafter"/>
</dbReference>
<dbReference type="GO" id="GO:0005524">
    <property type="term" value="F:ATP binding"/>
    <property type="evidence" value="ECO:0007669"/>
    <property type="project" value="UniProtKB-KW"/>
</dbReference>
<dbReference type="GO" id="GO:0033862">
    <property type="term" value="F:UMP kinase activity"/>
    <property type="evidence" value="ECO:0007669"/>
    <property type="project" value="UniProtKB-EC"/>
</dbReference>
<dbReference type="GO" id="GO:0044210">
    <property type="term" value="P:'de novo' CTP biosynthetic process"/>
    <property type="evidence" value="ECO:0007669"/>
    <property type="project" value="UniProtKB-UniRule"/>
</dbReference>
<dbReference type="GO" id="GO:0006225">
    <property type="term" value="P:UDP biosynthetic process"/>
    <property type="evidence" value="ECO:0007669"/>
    <property type="project" value="TreeGrafter"/>
</dbReference>
<dbReference type="CDD" id="cd04254">
    <property type="entry name" value="AAK_UMPK-PyrH-Ec"/>
    <property type="match status" value="1"/>
</dbReference>
<dbReference type="FunFam" id="3.40.1160.10:FF:000001">
    <property type="entry name" value="Uridylate kinase"/>
    <property type="match status" value="1"/>
</dbReference>
<dbReference type="Gene3D" id="3.40.1160.10">
    <property type="entry name" value="Acetylglutamate kinase-like"/>
    <property type="match status" value="1"/>
</dbReference>
<dbReference type="HAMAP" id="MF_01220_B">
    <property type="entry name" value="PyrH_B"/>
    <property type="match status" value="1"/>
</dbReference>
<dbReference type="InterPro" id="IPR036393">
    <property type="entry name" value="AceGlu_kinase-like_sf"/>
</dbReference>
<dbReference type="InterPro" id="IPR001048">
    <property type="entry name" value="Asp/Glu/Uridylate_kinase"/>
</dbReference>
<dbReference type="InterPro" id="IPR011817">
    <property type="entry name" value="Uridylate_kinase"/>
</dbReference>
<dbReference type="InterPro" id="IPR015963">
    <property type="entry name" value="Uridylate_kinase_bac"/>
</dbReference>
<dbReference type="NCBIfam" id="TIGR02075">
    <property type="entry name" value="pyrH_bact"/>
    <property type="match status" value="1"/>
</dbReference>
<dbReference type="PANTHER" id="PTHR42833">
    <property type="entry name" value="URIDYLATE KINASE"/>
    <property type="match status" value="1"/>
</dbReference>
<dbReference type="PANTHER" id="PTHR42833:SF4">
    <property type="entry name" value="URIDYLATE KINASE PUMPKIN, CHLOROPLASTIC"/>
    <property type="match status" value="1"/>
</dbReference>
<dbReference type="Pfam" id="PF00696">
    <property type="entry name" value="AA_kinase"/>
    <property type="match status" value="1"/>
</dbReference>
<dbReference type="PIRSF" id="PIRSF005650">
    <property type="entry name" value="Uridylate_kin"/>
    <property type="match status" value="1"/>
</dbReference>
<dbReference type="SUPFAM" id="SSF53633">
    <property type="entry name" value="Carbamate kinase-like"/>
    <property type="match status" value="1"/>
</dbReference>
<reference key="1">
    <citation type="journal article" date="2009" name="BMC Genomics">
        <title>Metabolic analysis of the soil microbe Dechloromonas aromatica str. RCB: indications of a surprisingly complex life-style and cryptic anaerobic pathways for aromatic degradation.</title>
        <authorList>
            <person name="Salinero K.K."/>
            <person name="Keller K."/>
            <person name="Feil W.S."/>
            <person name="Feil H."/>
            <person name="Trong S."/>
            <person name="Di Bartolo G."/>
            <person name="Lapidus A."/>
        </authorList>
    </citation>
    <scope>NUCLEOTIDE SEQUENCE [LARGE SCALE GENOMIC DNA]</scope>
    <source>
        <strain>RCB</strain>
    </source>
</reference>
<sequence>MSAPKYKRILLKLSGEALMGSDAYGINPQTIAAICGEIKAVADMGVEIGVVIGGGNIFRGMAGTATGMDRATADYMGMLATVMNAMALSDAFRQCGLNARVQSALNIEQVVEPYIRGKAIRYLEEGKIVIFGAGTGNPFFTTDTAAALRGSEIGAEIVLKATKVDGIYSADPKKDPSATRYDKISFNEAISKNLAVMDATAFALCRDQKLPINVFSIFKTGALKRVVCGEDEGTLVYC</sequence>
<comment type="function">
    <text evidence="1">Catalyzes the reversible phosphorylation of UMP to UDP.</text>
</comment>
<comment type="catalytic activity">
    <reaction evidence="1">
        <text>UMP + ATP = UDP + ADP</text>
        <dbReference type="Rhea" id="RHEA:24400"/>
        <dbReference type="ChEBI" id="CHEBI:30616"/>
        <dbReference type="ChEBI" id="CHEBI:57865"/>
        <dbReference type="ChEBI" id="CHEBI:58223"/>
        <dbReference type="ChEBI" id="CHEBI:456216"/>
        <dbReference type="EC" id="2.7.4.22"/>
    </reaction>
</comment>
<comment type="activity regulation">
    <text evidence="1">Inhibited by UTP.</text>
</comment>
<comment type="pathway">
    <text evidence="1">Pyrimidine metabolism; CTP biosynthesis via de novo pathway; UDP from UMP (UMPK route): step 1/1.</text>
</comment>
<comment type="subunit">
    <text evidence="1">Homohexamer.</text>
</comment>
<comment type="subcellular location">
    <subcellularLocation>
        <location evidence="1">Cytoplasm</location>
    </subcellularLocation>
</comment>
<comment type="similarity">
    <text evidence="1">Belongs to the UMP kinase family.</text>
</comment>
<feature type="chain" id="PRO_0000323832" description="Uridylate kinase">
    <location>
        <begin position="1"/>
        <end position="238"/>
    </location>
</feature>
<feature type="binding site" evidence="1">
    <location>
        <begin position="12"/>
        <end position="15"/>
    </location>
    <ligand>
        <name>ATP</name>
        <dbReference type="ChEBI" id="CHEBI:30616"/>
    </ligand>
</feature>
<feature type="binding site" evidence="1">
    <location>
        <position position="54"/>
    </location>
    <ligand>
        <name>UMP</name>
        <dbReference type="ChEBI" id="CHEBI:57865"/>
    </ligand>
</feature>
<feature type="binding site" evidence="1">
    <location>
        <position position="55"/>
    </location>
    <ligand>
        <name>ATP</name>
        <dbReference type="ChEBI" id="CHEBI:30616"/>
    </ligand>
</feature>
<feature type="binding site" evidence="1">
    <location>
        <position position="59"/>
    </location>
    <ligand>
        <name>ATP</name>
        <dbReference type="ChEBI" id="CHEBI:30616"/>
    </ligand>
</feature>
<feature type="binding site" evidence="1">
    <location>
        <position position="74"/>
    </location>
    <ligand>
        <name>UMP</name>
        <dbReference type="ChEBI" id="CHEBI:57865"/>
    </ligand>
</feature>
<feature type="binding site" evidence="1">
    <location>
        <begin position="135"/>
        <end position="142"/>
    </location>
    <ligand>
        <name>UMP</name>
        <dbReference type="ChEBI" id="CHEBI:57865"/>
    </ligand>
</feature>
<feature type="binding site" evidence="1">
    <location>
        <position position="162"/>
    </location>
    <ligand>
        <name>ATP</name>
        <dbReference type="ChEBI" id="CHEBI:30616"/>
    </ligand>
</feature>
<feature type="binding site" evidence="1">
    <location>
        <position position="168"/>
    </location>
    <ligand>
        <name>ATP</name>
        <dbReference type="ChEBI" id="CHEBI:30616"/>
    </ligand>
</feature>
<feature type="binding site" evidence="1">
    <location>
        <position position="171"/>
    </location>
    <ligand>
        <name>ATP</name>
        <dbReference type="ChEBI" id="CHEBI:30616"/>
    </ligand>
</feature>
<gene>
    <name evidence="1" type="primary">pyrH</name>
    <name type="ordered locus">Daro_1744</name>
</gene>
<organism>
    <name type="scientific">Dechloromonas aromatica (strain RCB)</name>
    <dbReference type="NCBI Taxonomy" id="159087"/>
    <lineage>
        <taxon>Bacteria</taxon>
        <taxon>Pseudomonadati</taxon>
        <taxon>Pseudomonadota</taxon>
        <taxon>Betaproteobacteria</taxon>
        <taxon>Rhodocyclales</taxon>
        <taxon>Azonexaceae</taxon>
        <taxon>Dechloromonas</taxon>
    </lineage>
</organism>